<protein>
    <recommendedName>
        <fullName evidence="1">Ribonuclease 3</fullName>
        <ecNumber evidence="1">3.1.26.3</ecNumber>
    </recommendedName>
    <alternativeName>
        <fullName evidence="1">Ribonuclease III</fullName>
        <shortName evidence="1">RNase III</shortName>
    </alternativeName>
</protein>
<dbReference type="EC" id="3.1.26.3" evidence="1"/>
<dbReference type="EMBL" id="CP001391">
    <property type="protein sequence ID" value="ACN95900.1"/>
    <property type="molecule type" value="Genomic_DNA"/>
</dbReference>
<dbReference type="RefSeq" id="WP_006279914.1">
    <property type="nucleotide sequence ID" value="NZ_MKIF01000098.1"/>
</dbReference>
<dbReference type="SMR" id="C0R4Q8"/>
<dbReference type="STRING" id="66084.WRi_012160"/>
<dbReference type="GeneID" id="70036709"/>
<dbReference type="KEGG" id="wri:WRi_012160"/>
<dbReference type="HOGENOM" id="CLU_000907_1_1_5"/>
<dbReference type="Proteomes" id="UP000001293">
    <property type="component" value="Chromosome"/>
</dbReference>
<dbReference type="GO" id="GO:0005737">
    <property type="term" value="C:cytoplasm"/>
    <property type="evidence" value="ECO:0007669"/>
    <property type="project" value="UniProtKB-SubCell"/>
</dbReference>
<dbReference type="GO" id="GO:0003725">
    <property type="term" value="F:double-stranded RNA binding"/>
    <property type="evidence" value="ECO:0007669"/>
    <property type="project" value="TreeGrafter"/>
</dbReference>
<dbReference type="GO" id="GO:0046872">
    <property type="term" value="F:metal ion binding"/>
    <property type="evidence" value="ECO:0007669"/>
    <property type="project" value="UniProtKB-KW"/>
</dbReference>
<dbReference type="GO" id="GO:0004525">
    <property type="term" value="F:ribonuclease III activity"/>
    <property type="evidence" value="ECO:0007669"/>
    <property type="project" value="UniProtKB-UniRule"/>
</dbReference>
<dbReference type="GO" id="GO:0019843">
    <property type="term" value="F:rRNA binding"/>
    <property type="evidence" value="ECO:0007669"/>
    <property type="project" value="UniProtKB-KW"/>
</dbReference>
<dbReference type="GO" id="GO:0006397">
    <property type="term" value="P:mRNA processing"/>
    <property type="evidence" value="ECO:0007669"/>
    <property type="project" value="UniProtKB-UniRule"/>
</dbReference>
<dbReference type="GO" id="GO:0010468">
    <property type="term" value="P:regulation of gene expression"/>
    <property type="evidence" value="ECO:0007669"/>
    <property type="project" value="TreeGrafter"/>
</dbReference>
<dbReference type="GO" id="GO:0006364">
    <property type="term" value="P:rRNA processing"/>
    <property type="evidence" value="ECO:0007669"/>
    <property type="project" value="UniProtKB-UniRule"/>
</dbReference>
<dbReference type="GO" id="GO:0008033">
    <property type="term" value="P:tRNA processing"/>
    <property type="evidence" value="ECO:0007669"/>
    <property type="project" value="UniProtKB-KW"/>
</dbReference>
<dbReference type="CDD" id="cd10845">
    <property type="entry name" value="DSRM_RNAse_III_family"/>
    <property type="match status" value="1"/>
</dbReference>
<dbReference type="CDD" id="cd00593">
    <property type="entry name" value="RIBOc"/>
    <property type="match status" value="1"/>
</dbReference>
<dbReference type="FunFam" id="1.10.1520.10:FF:000001">
    <property type="entry name" value="Ribonuclease 3"/>
    <property type="match status" value="1"/>
</dbReference>
<dbReference type="FunFam" id="3.30.160.20:FF:000003">
    <property type="entry name" value="Ribonuclease 3"/>
    <property type="match status" value="1"/>
</dbReference>
<dbReference type="Gene3D" id="3.30.160.20">
    <property type="match status" value="1"/>
</dbReference>
<dbReference type="Gene3D" id="1.10.1520.10">
    <property type="entry name" value="Ribonuclease III domain"/>
    <property type="match status" value="1"/>
</dbReference>
<dbReference type="HAMAP" id="MF_00104">
    <property type="entry name" value="RNase_III"/>
    <property type="match status" value="1"/>
</dbReference>
<dbReference type="InterPro" id="IPR014720">
    <property type="entry name" value="dsRBD_dom"/>
</dbReference>
<dbReference type="InterPro" id="IPR011907">
    <property type="entry name" value="RNase_III"/>
</dbReference>
<dbReference type="InterPro" id="IPR000999">
    <property type="entry name" value="RNase_III_dom"/>
</dbReference>
<dbReference type="InterPro" id="IPR036389">
    <property type="entry name" value="RNase_III_sf"/>
</dbReference>
<dbReference type="NCBIfam" id="TIGR02191">
    <property type="entry name" value="RNaseIII"/>
    <property type="match status" value="1"/>
</dbReference>
<dbReference type="PANTHER" id="PTHR11207:SF0">
    <property type="entry name" value="RIBONUCLEASE 3"/>
    <property type="match status" value="1"/>
</dbReference>
<dbReference type="PANTHER" id="PTHR11207">
    <property type="entry name" value="RIBONUCLEASE III"/>
    <property type="match status" value="1"/>
</dbReference>
<dbReference type="Pfam" id="PF00035">
    <property type="entry name" value="dsrm"/>
    <property type="match status" value="1"/>
</dbReference>
<dbReference type="Pfam" id="PF14622">
    <property type="entry name" value="Ribonucleas_3_3"/>
    <property type="match status" value="1"/>
</dbReference>
<dbReference type="SMART" id="SM00358">
    <property type="entry name" value="DSRM"/>
    <property type="match status" value="1"/>
</dbReference>
<dbReference type="SMART" id="SM00535">
    <property type="entry name" value="RIBOc"/>
    <property type="match status" value="1"/>
</dbReference>
<dbReference type="SUPFAM" id="SSF54768">
    <property type="entry name" value="dsRNA-binding domain-like"/>
    <property type="match status" value="1"/>
</dbReference>
<dbReference type="SUPFAM" id="SSF69065">
    <property type="entry name" value="RNase III domain-like"/>
    <property type="match status" value="1"/>
</dbReference>
<dbReference type="PROSITE" id="PS50137">
    <property type="entry name" value="DS_RBD"/>
    <property type="match status" value="1"/>
</dbReference>
<dbReference type="PROSITE" id="PS00517">
    <property type="entry name" value="RNASE_3_1"/>
    <property type="match status" value="1"/>
</dbReference>
<dbReference type="PROSITE" id="PS50142">
    <property type="entry name" value="RNASE_3_2"/>
    <property type="match status" value="1"/>
</dbReference>
<reference key="1">
    <citation type="journal article" date="2009" name="Proc. Natl. Acad. Sci. U.S.A.">
        <title>The mosaic genome structure of the Wolbachia wRi strain infecting Drosophila simulans.</title>
        <authorList>
            <person name="Klasson L."/>
            <person name="Westberg J."/>
            <person name="Sapountzis P."/>
            <person name="Naeslund K."/>
            <person name="Lutnaes Y."/>
            <person name="Darby A.C."/>
            <person name="Veneti Z."/>
            <person name="Chen L."/>
            <person name="Braig H.R."/>
            <person name="Garrett R."/>
            <person name="Bourtzis K."/>
            <person name="Andersson S.G."/>
        </authorList>
    </citation>
    <scope>NUCLEOTIDE SEQUENCE [LARGE SCALE GENOMIC DNA]</scope>
    <source>
        <strain>wRi</strain>
    </source>
</reference>
<accession>C0R4Q8</accession>
<keyword id="KW-0963">Cytoplasm</keyword>
<keyword id="KW-0255">Endonuclease</keyword>
<keyword id="KW-0378">Hydrolase</keyword>
<keyword id="KW-0460">Magnesium</keyword>
<keyword id="KW-0479">Metal-binding</keyword>
<keyword id="KW-0507">mRNA processing</keyword>
<keyword id="KW-0540">Nuclease</keyword>
<keyword id="KW-0694">RNA-binding</keyword>
<keyword id="KW-0698">rRNA processing</keyword>
<keyword id="KW-0699">rRNA-binding</keyword>
<keyword id="KW-0819">tRNA processing</keyword>
<name>RNC_WOLWR</name>
<comment type="function">
    <text evidence="1">Digests double-stranded RNA. Involved in the processing of primary rRNA transcript to yield the immediate precursors to the large and small rRNAs (23S and 16S). Processes some mRNAs, and tRNAs when they are encoded in the rRNA operon. Processes pre-crRNA and tracrRNA of type II CRISPR loci if present in the organism.</text>
</comment>
<comment type="catalytic activity">
    <reaction evidence="1">
        <text>Endonucleolytic cleavage to 5'-phosphomonoester.</text>
        <dbReference type="EC" id="3.1.26.3"/>
    </reaction>
</comment>
<comment type="cofactor">
    <cofactor evidence="1">
        <name>Mg(2+)</name>
        <dbReference type="ChEBI" id="CHEBI:18420"/>
    </cofactor>
</comment>
<comment type="subunit">
    <text evidence="1">Homodimer.</text>
</comment>
<comment type="subcellular location">
    <subcellularLocation>
        <location evidence="1">Cytoplasm</location>
    </subcellularLocation>
</comment>
<comment type="similarity">
    <text evidence="1">Belongs to the ribonuclease III family.</text>
</comment>
<evidence type="ECO:0000255" key="1">
    <source>
        <dbReference type="HAMAP-Rule" id="MF_00104"/>
    </source>
</evidence>
<organism>
    <name type="scientific">Wolbachia sp. subsp. Drosophila simulans (strain wRi)</name>
    <dbReference type="NCBI Taxonomy" id="66084"/>
    <lineage>
        <taxon>Bacteria</taxon>
        <taxon>Pseudomonadati</taxon>
        <taxon>Pseudomonadota</taxon>
        <taxon>Alphaproteobacteria</taxon>
        <taxon>Rickettsiales</taxon>
        <taxon>Anaplasmataceae</taxon>
        <taxon>Wolbachieae</taxon>
        <taxon>Wolbachia</taxon>
    </lineage>
</organism>
<proteinExistence type="inferred from homology"/>
<gene>
    <name evidence="1" type="primary">rnc</name>
    <name type="ordered locus">WRi_012160</name>
</gene>
<feature type="chain" id="PRO_1000118943" description="Ribonuclease 3">
    <location>
        <begin position="1"/>
        <end position="232"/>
    </location>
</feature>
<feature type="domain" description="RNase III" evidence="1">
    <location>
        <begin position="5"/>
        <end position="134"/>
    </location>
</feature>
<feature type="domain" description="DRBM" evidence="1">
    <location>
        <begin position="159"/>
        <end position="228"/>
    </location>
</feature>
<feature type="active site" evidence="1">
    <location>
        <position position="51"/>
    </location>
</feature>
<feature type="active site" evidence="1">
    <location>
        <position position="123"/>
    </location>
</feature>
<feature type="binding site" evidence="1">
    <location>
        <position position="47"/>
    </location>
    <ligand>
        <name>Mg(2+)</name>
        <dbReference type="ChEBI" id="CHEBI:18420"/>
    </ligand>
</feature>
<feature type="binding site" evidence="1">
    <location>
        <position position="120"/>
    </location>
    <ligand>
        <name>Mg(2+)</name>
        <dbReference type="ChEBI" id="CHEBI:18420"/>
    </ligand>
</feature>
<feature type="binding site" evidence="1">
    <location>
        <position position="123"/>
    </location>
    <ligand>
        <name>Mg(2+)</name>
        <dbReference type="ChEBI" id="CHEBI:18420"/>
    </ligand>
</feature>
<sequence length="232" mass="25848">MKSLNDAISKIIDYKFTNYAILEEALTHPSVNKRNSKNQIVSYERLEFLGDSVLNMVVSATLFKLFPEEKEGALAKRKTDLVCGNTIANVAKEIKLGSFIIMNNSERCNGGRCNLKNLENSLEALIGAIYIDGGLENVEKFIIQYWEKLAKGMLDPPQDPKTSLQEWTQKNKLPLPEYELVKQTGPAHNPEFTISVCIEDYGKVSACASSKKIAEQKAAELMLEKIGKDASV</sequence>